<dbReference type="EMBL" id="AJ938182">
    <property type="protein sequence ID" value="CAI80263.1"/>
    <property type="molecule type" value="Genomic_DNA"/>
</dbReference>
<dbReference type="RefSeq" id="WP_001048985.1">
    <property type="nucleotide sequence ID" value="NC_007622.1"/>
</dbReference>
<dbReference type="SMR" id="Q2YSV5"/>
<dbReference type="KEGG" id="sab:SAB0575"/>
<dbReference type="HOGENOM" id="CLU_082058_3_1_9"/>
<dbReference type="GO" id="GO:0005886">
    <property type="term" value="C:plasma membrane"/>
    <property type="evidence" value="ECO:0007669"/>
    <property type="project" value="UniProtKB-SubCell"/>
</dbReference>
<dbReference type="GO" id="GO:0015297">
    <property type="term" value="F:antiporter activity"/>
    <property type="evidence" value="ECO:0007669"/>
    <property type="project" value="UniProtKB-KW"/>
</dbReference>
<dbReference type="GO" id="GO:0006811">
    <property type="term" value="P:monoatomic ion transport"/>
    <property type="evidence" value="ECO:0007669"/>
    <property type="project" value="UniProtKB-KW"/>
</dbReference>
<dbReference type="Gene3D" id="1.10.287.3510">
    <property type="match status" value="1"/>
</dbReference>
<dbReference type="InterPro" id="IPR050601">
    <property type="entry name" value="CPA3_antiporter_subunitC"/>
</dbReference>
<dbReference type="InterPro" id="IPR039428">
    <property type="entry name" value="NUOK/Mnh_C1-like"/>
</dbReference>
<dbReference type="NCBIfam" id="NF009303">
    <property type="entry name" value="PRK12660.1"/>
    <property type="match status" value="1"/>
</dbReference>
<dbReference type="PANTHER" id="PTHR34583">
    <property type="entry name" value="ANTIPORTER SUBUNIT MNHC2-RELATED"/>
    <property type="match status" value="1"/>
</dbReference>
<dbReference type="PANTHER" id="PTHR34583:SF2">
    <property type="entry name" value="ANTIPORTER SUBUNIT MNHC2-RELATED"/>
    <property type="match status" value="1"/>
</dbReference>
<dbReference type="Pfam" id="PF00420">
    <property type="entry name" value="Oxidored_q2"/>
    <property type="match status" value="1"/>
</dbReference>
<comment type="subunit">
    <text evidence="1">May form a heterooligomeric complex that consists of seven subunits: mnhA2, mnhB2, mnhC2, mnhD2, mnhE2, mnhF2 and mnhG2.</text>
</comment>
<comment type="subcellular location">
    <subcellularLocation>
        <location evidence="3">Cell membrane</location>
        <topology evidence="3">Multi-pass membrane protein</topology>
    </subcellularLocation>
</comment>
<comment type="similarity">
    <text evidence="3">Belongs to the CPA3 antiporters (TC 2.A.63) subunit C family.</text>
</comment>
<reference key="1">
    <citation type="journal article" date="2007" name="PLoS ONE">
        <title>Molecular correlates of host specialization in Staphylococcus aureus.</title>
        <authorList>
            <person name="Herron-Olson L."/>
            <person name="Fitzgerald J.R."/>
            <person name="Musser J.M."/>
            <person name="Kapur V."/>
        </authorList>
    </citation>
    <scope>NUCLEOTIDE SEQUENCE [LARGE SCALE GENOMIC DNA]</scope>
    <source>
        <strain>bovine RF122 / ET3-1</strain>
    </source>
</reference>
<gene>
    <name type="primary">mnhC2</name>
    <name type="synonym">mrpC2</name>
    <name type="ordered locus">SAB0575</name>
</gene>
<name>MNHC2_STAAB</name>
<proteinExistence type="inferred from homology"/>
<organism>
    <name type="scientific">Staphylococcus aureus (strain bovine RF122 / ET3-1)</name>
    <dbReference type="NCBI Taxonomy" id="273036"/>
    <lineage>
        <taxon>Bacteria</taxon>
        <taxon>Bacillati</taxon>
        <taxon>Bacillota</taxon>
        <taxon>Bacilli</taxon>
        <taxon>Bacillales</taxon>
        <taxon>Staphylococcaceae</taxon>
        <taxon>Staphylococcus</taxon>
    </lineage>
</organism>
<sequence length="114" mass="12496">MNLILLLVIGFLVFIGTYMILSINLIRIVIGISIYTHAGNLIIMSMGTYGSSRSEPLITGGNQLFVDPLLQAIVLTAIVIGFGMTAFLLVLVYRTYKVTKEDEIEGLRGEDDAK</sequence>
<evidence type="ECO:0000250" key="1"/>
<evidence type="ECO:0000255" key="2"/>
<evidence type="ECO:0000305" key="3"/>
<accession>Q2YSV5</accession>
<keyword id="KW-0050">Antiport</keyword>
<keyword id="KW-1003">Cell membrane</keyword>
<keyword id="KW-0406">Ion transport</keyword>
<keyword id="KW-0472">Membrane</keyword>
<keyword id="KW-0812">Transmembrane</keyword>
<keyword id="KW-1133">Transmembrane helix</keyword>
<keyword id="KW-0813">Transport</keyword>
<protein>
    <recommendedName>
        <fullName>Putative antiporter subunit mnhC2</fullName>
    </recommendedName>
    <alternativeName>
        <fullName>Mrp complex subunit C2</fullName>
    </alternativeName>
    <alternativeName>
        <fullName>Putative NADH-ubiquinone oxidoreductase subunit mnhC2</fullName>
    </alternativeName>
</protein>
<feature type="chain" id="PRO_0000372248" description="Putative antiporter subunit mnhC2">
    <location>
        <begin position="1"/>
        <end position="114"/>
    </location>
</feature>
<feature type="transmembrane region" description="Helical" evidence="2">
    <location>
        <begin position="3"/>
        <end position="23"/>
    </location>
</feature>
<feature type="transmembrane region" description="Helical" evidence="2">
    <location>
        <begin position="28"/>
        <end position="48"/>
    </location>
</feature>
<feature type="transmembrane region" description="Helical" evidence="2">
    <location>
        <begin position="72"/>
        <end position="92"/>
    </location>
</feature>